<protein>
    <recommendedName>
        <fullName evidence="1">Probable cytosol aminopeptidase</fullName>
        <ecNumber evidence="1">3.4.11.1</ecNumber>
    </recommendedName>
    <alternativeName>
        <fullName evidence="1">Leucine aminopeptidase</fullName>
        <shortName evidence="1">LAP</shortName>
        <ecNumber evidence="1">3.4.11.10</ecNumber>
    </alternativeName>
    <alternativeName>
        <fullName evidence="1">Leucyl aminopeptidase</fullName>
    </alternativeName>
</protein>
<keyword id="KW-0031">Aminopeptidase</keyword>
<keyword id="KW-0963">Cytoplasm</keyword>
<keyword id="KW-0378">Hydrolase</keyword>
<keyword id="KW-0464">Manganese</keyword>
<keyword id="KW-0479">Metal-binding</keyword>
<keyword id="KW-0645">Protease</keyword>
<keyword id="KW-1185">Reference proteome</keyword>
<dbReference type="EC" id="3.4.11.1" evidence="1"/>
<dbReference type="EC" id="3.4.11.10" evidence="1"/>
<dbReference type="EMBL" id="CP001291">
    <property type="protein sequence ID" value="ACK70215.1"/>
    <property type="molecule type" value="Genomic_DNA"/>
</dbReference>
<dbReference type="RefSeq" id="WP_012599158.1">
    <property type="nucleotide sequence ID" value="NC_011729.1"/>
</dbReference>
<dbReference type="SMR" id="B7KCB0"/>
<dbReference type="STRING" id="65393.PCC7424_1781"/>
<dbReference type="MEROPS" id="M17.A03"/>
<dbReference type="KEGG" id="cyc:PCC7424_1781"/>
<dbReference type="eggNOG" id="COG0260">
    <property type="taxonomic scope" value="Bacteria"/>
</dbReference>
<dbReference type="HOGENOM" id="CLU_013734_5_1_3"/>
<dbReference type="OrthoDB" id="9809354at2"/>
<dbReference type="Proteomes" id="UP000002384">
    <property type="component" value="Chromosome"/>
</dbReference>
<dbReference type="GO" id="GO:0005737">
    <property type="term" value="C:cytoplasm"/>
    <property type="evidence" value="ECO:0007669"/>
    <property type="project" value="UniProtKB-SubCell"/>
</dbReference>
<dbReference type="GO" id="GO:0030145">
    <property type="term" value="F:manganese ion binding"/>
    <property type="evidence" value="ECO:0007669"/>
    <property type="project" value="UniProtKB-UniRule"/>
</dbReference>
<dbReference type="GO" id="GO:0070006">
    <property type="term" value="F:metalloaminopeptidase activity"/>
    <property type="evidence" value="ECO:0007669"/>
    <property type="project" value="InterPro"/>
</dbReference>
<dbReference type="GO" id="GO:0006508">
    <property type="term" value="P:proteolysis"/>
    <property type="evidence" value="ECO:0007669"/>
    <property type="project" value="UniProtKB-KW"/>
</dbReference>
<dbReference type="CDD" id="cd00433">
    <property type="entry name" value="Peptidase_M17"/>
    <property type="match status" value="1"/>
</dbReference>
<dbReference type="Gene3D" id="3.40.220.10">
    <property type="entry name" value="Leucine Aminopeptidase, subunit E, domain 1"/>
    <property type="match status" value="1"/>
</dbReference>
<dbReference type="Gene3D" id="3.40.630.10">
    <property type="entry name" value="Zn peptidases"/>
    <property type="match status" value="1"/>
</dbReference>
<dbReference type="HAMAP" id="MF_00181">
    <property type="entry name" value="Cytosol_peptidase_M17"/>
    <property type="match status" value="1"/>
</dbReference>
<dbReference type="InterPro" id="IPR011356">
    <property type="entry name" value="Leucine_aapep/pepB"/>
</dbReference>
<dbReference type="InterPro" id="IPR043472">
    <property type="entry name" value="Macro_dom-like"/>
</dbReference>
<dbReference type="InterPro" id="IPR000819">
    <property type="entry name" value="Peptidase_M17_C"/>
</dbReference>
<dbReference type="InterPro" id="IPR023042">
    <property type="entry name" value="Peptidase_M17_leu_NH2_pept"/>
</dbReference>
<dbReference type="InterPro" id="IPR008283">
    <property type="entry name" value="Peptidase_M17_N"/>
</dbReference>
<dbReference type="NCBIfam" id="NF002073">
    <property type="entry name" value="PRK00913.1-2"/>
    <property type="match status" value="1"/>
</dbReference>
<dbReference type="NCBIfam" id="NF002074">
    <property type="entry name" value="PRK00913.1-4"/>
    <property type="match status" value="1"/>
</dbReference>
<dbReference type="NCBIfam" id="NF002076">
    <property type="entry name" value="PRK00913.2-3"/>
    <property type="match status" value="1"/>
</dbReference>
<dbReference type="NCBIfam" id="NF002083">
    <property type="entry name" value="PRK00913.3-5"/>
    <property type="match status" value="1"/>
</dbReference>
<dbReference type="PANTHER" id="PTHR11963:SF23">
    <property type="entry name" value="CYTOSOL AMINOPEPTIDASE"/>
    <property type="match status" value="1"/>
</dbReference>
<dbReference type="PANTHER" id="PTHR11963">
    <property type="entry name" value="LEUCINE AMINOPEPTIDASE-RELATED"/>
    <property type="match status" value="1"/>
</dbReference>
<dbReference type="Pfam" id="PF00883">
    <property type="entry name" value="Peptidase_M17"/>
    <property type="match status" value="1"/>
</dbReference>
<dbReference type="Pfam" id="PF02789">
    <property type="entry name" value="Peptidase_M17_N"/>
    <property type="match status" value="1"/>
</dbReference>
<dbReference type="PRINTS" id="PR00481">
    <property type="entry name" value="LAMNOPPTDASE"/>
</dbReference>
<dbReference type="SUPFAM" id="SSF52949">
    <property type="entry name" value="Macro domain-like"/>
    <property type="match status" value="1"/>
</dbReference>
<dbReference type="SUPFAM" id="SSF53187">
    <property type="entry name" value="Zn-dependent exopeptidases"/>
    <property type="match status" value="1"/>
</dbReference>
<dbReference type="PROSITE" id="PS00631">
    <property type="entry name" value="CYTOSOL_AP"/>
    <property type="match status" value="1"/>
</dbReference>
<name>AMPA_GLOC7</name>
<evidence type="ECO:0000255" key="1">
    <source>
        <dbReference type="HAMAP-Rule" id="MF_00181"/>
    </source>
</evidence>
<organism>
    <name type="scientific">Gloeothece citriformis (strain PCC 7424)</name>
    <name type="common">Cyanothece sp. (strain PCC 7424)</name>
    <dbReference type="NCBI Taxonomy" id="65393"/>
    <lineage>
        <taxon>Bacteria</taxon>
        <taxon>Bacillati</taxon>
        <taxon>Cyanobacteriota</taxon>
        <taxon>Cyanophyceae</taxon>
        <taxon>Oscillatoriophycideae</taxon>
        <taxon>Chroococcales</taxon>
        <taxon>Aphanothecaceae</taxon>
        <taxon>Gloeothece</taxon>
        <taxon>Gloeothece citriformis</taxon>
    </lineage>
</organism>
<comment type="function">
    <text evidence="1">Presumably involved in the processing and regular turnover of intracellular proteins. Catalyzes the removal of unsubstituted N-terminal amino acids from various peptides.</text>
</comment>
<comment type="catalytic activity">
    <reaction evidence="1">
        <text>Release of an N-terminal amino acid, Xaa-|-Yaa-, in which Xaa is preferably Leu, but may be other amino acids including Pro although not Arg or Lys, and Yaa may be Pro. Amino acid amides and methyl esters are also readily hydrolyzed, but rates on arylamides are exceedingly low.</text>
        <dbReference type="EC" id="3.4.11.1"/>
    </reaction>
</comment>
<comment type="catalytic activity">
    <reaction evidence="1">
        <text>Release of an N-terminal amino acid, preferentially leucine, but not glutamic or aspartic acids.</text>
        <dbReference type="EC" id="3.4.11.10"/>
    </reaction>
</comment>
<comment type="cofactor">
    <cofactor evidence="1">
        <name>Mn(2+)</name>
        <dbReference type="ChEBI" id="CHEBI:29035"/>
    </cofactor>
    <text evidence="1">Binds 2 manganese ions per subunit.</text>
</comment>
<comment type="subcellular location">
    <subcellularLocation>
        <location evidence="1">Cytoplasm</location>
    </subcellularLocation>
</comment>
<comment type="similarity">
    <text evidence="1">Belongs to the peptidase M17 family.</text>
</comment>
<reference key="1">
    <citation type="journal article" date="2011" name="MBio">
        <title>Novel metabolic attributes of the genus Cyanothece, comprising a group of unicellular nitrogen-fixing Cyanobacteria.</title>
        <authorList>
            <person name="Bandyopadhyay A."/>
            <person name="Elvitigala T."/>
            <person name="Welsh E."/>
            <person name="Stockel J."/>
            <person name="Liberton M."/>
            <person name="Min H."/>
            <person name="Sherman L.A."/>
            <person name="Pakrasi H.B."/>
        </authorList>
    </citation>
    <scope>NUCLEOTIDE SEQUENCE [LARGE SCALE GENOMIC DNA]</scope>
    <source>
        <strain>PCC 7424</strain>
    </source>
</reference>
<sequence>MDIRATEQTILNWTGETLALGIFEGATELTEELGELNERLGGTLQELITEEEFEAKTGTSAVTRLGKDSPIRKLILVGLGKPEDFKLHSLRNAAANIARSAKKLKIKTLGISLPVFNNAPTLTTGAIVEGVLLALHTDLRFKSEPEDKGAKLETVDLLGLAGQETAINQAQIICDGVILARELVNGPANSVTPITMAQTAETLASDYGLTLTILEQEDCEKLGMGAYLGVAKASDLPPKFIHLTYKPEGTPKRKLAIVGKSLTFDSGGLNIKVSGSGIETMKMDMGGGAATLGAAKAIAQLKPDVEVHFICAATENMISGKAMHPGDILTASNGKTIEVNNTDAEGRLTLADALVFAEQLEVDAIVDLATLTGACIIALGDDISGLWSPNEELATQLKTAAELAGEKFWQMPLEEKYFEGMKSPIADMKNTGPRAGGSITAALFLKQFIKETPWAHLDIAGPVWTDKEGGINNTGATGFPVRTLVNWVLS</sequence>
<feature type="chain" id="PRO_1000118450" description="Probable cytosol aminopeptidase">
    <location>
        <begin position="1"/>
        <end position="490"/>
    </location>
</feature>
<feature type="active site" evidence="1">
    <location>
        <position position="272"/>
    </location>
</feature>
<feature type="active site" evidence="1">
    <location>
        <position position="347"/>
    </location>
</feature>
<feature type="binding site" evidence="1">
    <location>
        <position position="260"/>
    </location>
    <ligand>
        <name>Mn(2+)</name>
        <dbReference type="ChEBI" id="CHEBI:29035"/>
        <label>2</label>
    </ligand>
</feature>
<feature type="binding site" evidence="1">
    <location>
        <position position="265"/>
    </location>
    <ligand>
        <name>Mn(2+)</name>
        <dbReference type="ChEBI" id="CHEBI:29035"/>
        <label>1</label>
    </ligand>
</feature>
<feature type="binding site" evidence="1">
    <location>
        <position position="265"/>
    </location>
    <ligand>
        <name>Mn(2+)</name>
        <dbReference type="ChEBI" id="CHEBI:29035"/>
        <label>2</label>
    </ligand>
</feature>
<feature type="binding site" evidence="1">
    <location>
        <position position="284"/>
    </location>
    <ligand>
        <name>Mn(2+)</name>
        <dbReference type="ChEBI" id="CHEBI:29035"/>
        <label>2</label>
    </ligand>
</feature>
<feature type="binding site" evidence="1">
    <location>
        <position position="343"/>
    </location>
    <ligand>
        <name>Mn(2+)</name>
        <dbReference type="ChEBI" id="CHEBI:29035"/>
        <label>1</label>
    </ligand>
</feature>
<feature type="binding site" evidence="1">
    <location>
        <position position="345"/>
    </location>
    <ligand>
        <name>Mn(2+)</name>
        <dbReference type="ChEBI" id="CHEBI:29035"/>
        <label>1</label>
    </ligand>
</feature>
<feature type="binding site" evidence="1">
    <location>
        <position position="345"/>
    </location>
    <ligand>
        <name>Mn(2+)</name>
        <dbReference type="ChEBI" id="CHEBI:29035"/>
        <label>2</label>
    </ligand>
</feature>
<accession>B7KCB0</accession>
<gene>
    <name evidence="1" type="primary">pepA</name>
    <name type="ordered locus">PCC7424_1781</name>
</gene>
<proteinExistence type="inferred from homology"/>